<feature type="chain" id="PRO_1000165736" description="Large ribosomal subunit protein uL2">
    <location>
        <begin position="1"/>
        <end position="278"/>
    </location>
</feature>
<feature type="region of interest" description="Disordered" evidence="2">
    <location>
        <begin position="1"/>
        <end position="53"/>
    </location>
</feature>
<feature type="region of interest" description="Disordered" evidence="2">
    <location>
        <begin position="224"/>
        <end position="278"/>
    </location>
</feature>
<feature type="compositionally biased region" description="Basic and acidic residues" evidence="2">
    <location>
        <begin position="23"/>
        <end position="33"/>
    </location>
</feature>
<feature type="compositionally biased region" description="Polar residues" evidence="2">
    <location>
        <begin position="258"/>
        <end position="267"/>
    </location>
</feature>
<feature type="compositionally biased region" description="Basic residues" evidence="2">
    <location>
        <begin position="269"/>
        <end position="278"/>
    </location>
</feature>
<protein>
    <recommendedName>
        <fullName evidence="1">Large ribosomal subunit protein uL2</fullName>
    </recommendedName>
    <alternativeName>
        <fullName evidence="3">50S ribosomal protein L2</fullName>
    </alternativeName>
</protein>
<sequence>MAIRKYKPTTPGRRASSVSEFEEITRSTPEKSLLRPLSKTGGRNNYGRITTRHIGGGHKRRYRLIDFRRTDKDGIPAKVAHIEYDPNRTANIALLHYADGEKRYIIAPKGLKQGTIVEAGPNADIKVGNNLPLRNIPTGTTIHAVELKPGAGAKLARSAGASIQLLGKEGKYAILRMPSSEIRRVDIRCRATVGEVGNADQMNIRWGKAGRMRWKGVRPTVRGVVMNPVDHPHGGGEGKTSGGRHPVSPWGHKEGRTRNPNRYSNNMIVRRRRPNKKR</sequence>
<dbReference type="EMBL" id="CP001601">
    <property type="protein sequence ID" value="ACP31991.1"/>
    <property type="molecule type" value="Genomic_DNA"/>
</dbReference>
<dbReference type="RefSeq" id="WP_010189648.1">
    <property type="nucleotide sequence ID" value="NZ_ACLH01000066.1"/>
</dbReference>
<dbReference type="SMR" id="C3PKQ5"/>
<dbReference type="STRING" id="548476.cauri_0392"/>
<dbReference type="GeneID" id="31923011"/>
<dbReference type="KEGG" id="car:cauri_0392"/>
<dbReference type="eggNOG" id="COG0090">
    <property type="taxonomic scope" value="Bacteria"/>
</dbReference>
<dbReference type="HOGENOM" id="CLU_036235_2_1_11"/>
<dbReference type="OrthoDB" id="9778722at2"/>
<dbReference type="Proteomes" id="UP000002077">
    <property type="component" value="Chromosome"/>
</dbReference>
<dbReference type="GO" id="GO:0015934">
    <property type="term" value="C:large ribosomal subunit"/>
    <property type="evidence" value="ECO:0007669"/>
    <property type="project" value="InterPro"/>
</dbReference>
<dbReference type="GO" id="GO:0019843">
    <property type="term" value="F:rRNA binding"/>
    <property type="evidence" value="ECO:0007669"/>
    <property type="project" value="UniProtKB-UniRule"/>
</dbReference>
<dbReference type="GO" id="GO:0003735">
    <property type="term" value="F:structural constituent of ribosome"/>
    <property type="evidence" value="ECO:0007669"/>
    <property type="project" value="InterPro"/>
</dbReference>
<dbReference type="GO" id="GO:0016740">
    <property type="term" value="F:transferase activity"/>
    <property type="evidence" value="ECO:0007669"/>
    <property type="project" value="InterPro"/>
</dbReference>
<dbReference type="GO" id="GO:0002181">
    <property type="term" value="P:cytoplasmic translation"/>
    <property type="evidence" value="ECO:0007669"/>
    <property type="project" value="TreeGrafter"/>
</dbReference>
<dbReference type="FunFam" id="2.30.30.30:FF:000001">
    <property type="entry name" value="50S ribosomal protein L2"/>
    <property type="match status" value="1"/>
</dbReference>
<dbReference type="FunFam" id="2.40.50.140:FF:000003">
    <property type="entry name" value="50S ribosomal protein L2"/>
    <property type="match status" value="1"/>
</dbReference>
<dbReference type="FunFam" id="4.10.950.10:FF:000001">
    <property type="entry name" value="50S ribosomal protein L2"/>
    <property type="match status" value="1"/>
</dbReference>
<dbReference type="Gene3D" id="2.30.30.30">
    <property type="match status" value="1"/>
</dbReference>
<dbReference type="Gene3D" id="2.40.50.140">
    <property type="entry name" value="Nucleic acid-binding proteins"/>
    <property type="match status" value="1"/>
</dbReference>
<dbReference type="Gene3D" id="4.10.950.10">
    <property type="entry name" value="Ribosomal protein L2, domain 3"/>
    <property type="match status" value="1"/>
</dbReference>
<dbReference type="HAMAP" id="MF_01320_B">
    <property type="entry name" value="Ribosomal_uL2_B"/>
    <property type="match status" value="1"/>
</dbReference>
<dbReference type="InterPro" id="IPR012340">
    <property type="entry name" value="NA-bd_OB-fold"/>
</dbReference>
<dbReference type="InterPro" id="IPR014722">
    <property type="entry name" value="Rib_uL2_dom2"/>
</dbReference>
<dbReference type="InterPro" id="IPR002171">
    <property type="entry name" value="Ribosomal_uL2"/>
</dbReference>
<dbReference type="InterPro" id="IPR005880">
    <property type="entry name" value="Ribosomal_uL2_bac/org-type"/>
</dbReference>
<dbReference type="InterPro" id="IPR022669">
    <property type="entry name" value="Ribosomal_uL2_C"/>
</dbReference>
<dbReference type="InterPro" id="IPR022671">
    <property type="entry name" value="Ribosomal_uL2_CS"/>
</dbReference>
<dbReference type="InterPro" id="IPR014726">
    <property type="entry name" value="Ribosomal_uL2_dom3"/>
</dbReference>
<dbReference type="InterPro" id="IPR022666">
    <property type="entry name" value="Ribosomal_uL2_RNA-bd_dom"/>
</dbReference>
<dbReference type="InterPro" id="IPR008991">
    <property type="entry name" value="Translation_prot_SH3-like_sf"/>
</dbReference>
<dbReference type="NCBIfam" id="TIGR01171">
    <property type="entry name" value="rplB_bact"/>
    <property type="match status" value="1"/>
</dbReference>
<dbReference type="PANTHER" id="PTHR13691:SF5">
    <property type="entry name" value="LARGE RIBOSOMAL SUBUNIT PROTEIN UL2M"/>
    <property type="match status" value="1"/>
</dbReference>
<dbReference type="PANTHER" id="PTHR13691">
    <property type="entry name" value="RIBOSOMAL PROTEIN L2"/>
    <property type="match status" value="1"/>
</dbReference>
<dbReference type="Pfam" id="PF00181">
    <property type="entry name" value="Ribosomal_L2"/>
    <property type="match status" value="1"/>
</dbReference>
<dbReference type="Pfam" id="PF03947">
    <property type="entry name" value="Ribosomal_L2_C"/>
    <property type="match status" value="1"/>
</dbReference>
<dbReference type="PIRSF" id="PIRSF002158">
    <property type="entry name" value="Ribosomal_L2"/>
    <property type="match status" value="1"/>
</dbReference>
<dbReference type="SMART" id="SM01383">
    <property type="entry name" value="Ribosomal_L2"/>
    <property type="match status" value="1"/>
</dbReference>
<dbReference type="SMART" id="SM01382">
    <property type="entry name" value="Ribosomal_L2_C"/>
    <property type="match status" value="1"/>
</dbReference>
<dbReference type="SUPFAM" id="SSF50249">
    <property type="entry name" value="Nucleic acid-binding proteins"/>
    <property type="match status" value="1"/>
</dbReference>
<dbReference type="SUPFAM" id="SSF50104">
    <property type="entry name" value="Translation proteins SH3-like domain"/>
    <property type="match status" value="1"/>
</dbReference>
<dbReference type="PROSITE" id="PS00467">
    <property type="entry name" value="RIBOSOMAL_L2"/>
    <property type="match status" value="1"/>
</dbReference>
<keyword id="KW-1185">Reference proteome</keyword>
<keyword id="KW-0687">Ribonucleoprotein</keyword>
<keyword id="KW-0689">Ribosomal protein</keyword>
<keyword id="KW-0694">RNA-binding</keyword>
<keyword id="KW-0699">rRNA-binding</keyword>
<name>RL2_CORA7</name>
<evidence type="ECO:0000255" key="1">
    <source>
        <dbReference type="HAMAP-Rule" id="MF_01320"/>
    </source>
</evidence>
<evidence type="ECO:0000256" key="2">
    <source>
        <dbReference type="SAM" id="MobiDB-lite"/>
    </source>
</evidence>
<evidence type="ECO:0000305" key="3"/>
<comment type="function">
    <text evidence="1">One of the primary rRNA binding proteins. Required for association of the 30S and 50S subunits to form the 70S ribosome, for tRNA binding and peptide bond formation. It has been suggested to have peptidyltransferase activity; this is somewhat controversial. Makes several contacts with the 16S rRNA in the 70S ribosome.</text>
</comment>
<comment type="subunit">
    <text evidence="1">Part of the 50S ribosomal subunit. Forms a bridge to the 30S subunit in the 70S ribosome.</text>
</comment>
<comment type="similarity">
    <text evidence="1">Belongs to the universal ribosomal protein uL2 family.</text>
</comment>
<organism>
    <name type="scientific">Corynebacterium aurimucosum (strain ATCC 700975 / DSM 44827 / CIP 107346 / CN-1)</name>
    <name type="common">Corynebacterium nigricans</name>
    <dbReference type="NCBI Taxonomy" id="548476"/>
    <lineage>
        <taxon>Bacteria</taxon>
        <taxon>Bacillati</taxon>
        <taxon>Actinomycetota</taxon>
        <taxon>Actinomycetes</taxon>
        <taxon>Mycobacteriales</taxon>
        <taxon>Corynebacteriaceae</taxon>
        <taxon>Corynebacterium</taxon>
    </lineage>
</organism>
<gene>
    <name evidence="1" type="primary">rplB</name>
    <name type="ordered locus">cauri_0392</name>
</gene>
<proteinExistence type="inferred from homology"/>
<reference key="1">
    <citation type="journal article" date="2010" name="BMC Genomics">
        <title>Complete genome sequence and lifestyle of black-pigmented Corynebacterium aurimucosum ATCC 700975 (formerly C. nigricans CN-1) isolated from a vaginal swab of a woman with spontaneous abortion.</title>
        <authorList>
            <person name="Trost E."/>
            <person name="Gotker S."/>
            <person name="Schneider J."/>
            <person name="Schneiker-Bekel S."/>
            <person name="Szczepanowski R."/>
            <person name="Tilker A."/>
            <person name="Viehoever P."/>
            <person name="Arnold W."/>
            <person name="Bekel T."/>
            <person name="Blom J."/>
            <person name="Gartemann K.H."/>
            <person name="Linke B."/>
            <person name="Goesmann A."/>
            <person name="Puhler A."/>
            <person name="Shukla S.K."/>
            <person name="Tauch A."/>
        </authorList>
    </citation>
    <scope>NUCLEOTIDE SEQUENCE [LARGE SCALE GENOMIC DNA]</scope>
    <source>
        <strain>ATCC 700975 / DSM 44827 / CIP 107346 / CN-1</strain>
    </source>
</reference>
<accession>C3PKQ5</accession>